<gene>
    <name type="primary">UBE2QL1</name>
</gene>
<keyword id="KW-0067">ATP-binding</keyword>
<keyword id="KW-0160">Chromosomal rearrangement</keyword>
<keyword id="KW-0547">Nucleotide-binding</keyword>
<keyword id="KW-0539">Nucleus</keyword>
<keyword id="KW-1185">Reference proteome</keyword>
<keyword id="KW-0808">Transferase</keyword>
<keyword id="KW-0833">Ubl conjugation pathway</keyword>
<feature type="chain" id="PRO_0000335811" description="Ubiquitin-conjugating enzyme E2Q-like protein 1">
    <location>
        <begin position="1"/>
        <end position="161"/>
    </location>
</feature>
<feature type="domain" description="UBC core" evidence="1">
    <location>
        <begin position="1"/>
        <end position="154"/>
    </location>
</feature>
<feature type="active site" description="Glycyl thioester intermediate" evidence="1 2">
    <location>
        <position position="88"/>
    </location>
</feature>
<feature type="mutagenesis site" description="Unable to bind ubiquitin." evidence="2">
    <original>C</original>
    <variation>A</variation>
    <location>
        <position position="88"/>
    </location>
</feature>
<feature type="mutagenesis site" description="Enhanced ubiquitin binding." evidence="2">
    <original>C</original>
    <variation>S</variation>
    <location>
        <position position="88"/>
    </location>
</feature>
<dbReference type="EC" id="2.3.2.23"/>
<dbReference type="EMBL" id="BC127723">
    <property type="protein sequence ID" value="AAI27724.1"/>
    <property type="status" value="ALT_INIT"/>
    <property type="molecule type" value="mRNA"/>
</dbReference>
<dbReference type="EMBL" id="BC150554">
    <property type="protein sequence ID" value="AAI50555.1"/>
    <property type="status" value="ALT_INIT"/>
    <property type="molecule type" value="mRNA"/>
</dbReference>
<dbReference type="CCDS" id="CCDS47189.1"/>
<dbReference type="RefSeq" id="NP_001138633.1">
    <property type="nucleotide sequence ID" value="NM_001145161.3"/>
</dbReference>
<dbReference type="SMR" id="A1L167"/>
<dbReference type="BioGRID" id="126384">
    <property type="interactions" value="2"/>
</dbReference>
<dbReference type="FunCoup" id="A1L167">
    <property type="interactions" value="659"/>
</dbReference>
<dbReference type="STRING" id="9606.ENSP00000382713"/>
<dbReference type="GlyGen" id="A1L167">
    <property type="glycosylation" value="1 site"/>
</dbReference>
<dbReference type="iPTMnet" id="A1L167"/>
<dbReference type="PhosphoSitePlus" id="A1L167"/>
<dbReference type="BioMuta" id="UBE2QL1"/>
<dbReference type="PaxDb" id="9606-ENSP00000382713"/>
<dbReference type="PeptideAtlas" id="A1L167"/>
<dbReference type="ProteomicsDB" id="132"/>
<dbReference type="DNASU" id="134111"/>
<dbReference type="Ensembl" id="ENST00000399816.4">
    <property type="protein sequence ID" value="ENSP00000382713.3"/>
    <property type="gene ID" value="ENSG00000215218.4"/>
</dbReference>
<dbReference type="Ensembl" id="ENST00000708565.1">
    <property type="protein sequence ID" value="ENSP00000517282.1"/>
    <property type="gene ID" value="ENSG00000291747.1"/>
</dbReference>
<dbReference type="GeneID" id="134111"/>
<dbReference type="KEGG" id="hsa:134111"/>
<dbReference type="MANE-Select" id="ENST00000399816.4">
    <property type="protein sequence ID" value="ENSP00000382713.3"/>
    <property type="RefSeq nucleotide sequence ID" value="NM_001145161.3"/>
    <property type="RefSeq protein sequence ID" value="NP_001138633.1"/>
</dbReference>
<dbReference type="UCSC" id="uc003jdp.5">
    <property type="organism name" value="human"/>
</dbReference>
<dbReference type="AGR" id="HGNC:37269"/>
<dbReference type="CTD" id="134111"/>
<dbReference type="DisGeNET" id="134111"/>
<dbReference type="GeneCards" id="UBE2QL1"/>
<dbReference type="HGNC" id="HGNC:37269">
    <property type="gene designation" value="UBE2QL1"/>
</dbReference>
<dbReference type="HPA" id="ENSG00000215218">
    <property type="expression patterns" value="Group enriched (brain, heart muscle, retina, skeletal muscle, tongue)"/>
</dbReference>
<dbReference type="MIM" id="615832">
    <property type="type" value="gene"/>
</dbReference>
<dbReference type="neXtProt" id="NX_A1L167"/>
<dbReference type="OpenTargets" id="ENSG00000215218"/>
<dbReference type="PharmGKB" id="PA165660602"/>
<dbReference type="VEuPathDB" id="HostDB:ENSG00000215218"/>
<dbReference type="eggNOG" id="KOG0897">
    <property type="taxonomic scope" value="Eukaryota"/>
</dbReference>
<dbReference type="GeneTree" id="ENSGT00940000161612"/>
<dbReference type="HOGENOM" id="CLU_089409_1_0_1"/>
<dbReference type="InParanoid" id="A1L167"/>
<dbReference type="OMA" id="WHVRLHQ"/>
<dbReference type="OrthoDB" id="109543at2759"/>
<dbReference type="PAN-GO" id="A1L167">
    <property type="GO annotations" value="3 GO annotations based on evolutionary models"/>
</dbReference>
<dbReference type="PhylomeDB" id="A1L167"/>
<dbReference type="TreeFam" id="TF313338"/>
<dbReference type="BRENDA" id="2.3.2.23">
    <property type="organism ID" value="2681"/>
</dbReference>
<dbReference type="PathwayCommons" id="A1L167"/>
<dbReference type="SignaLink" id="A1L167"/>
<dbReference type="UniPathway" id="UPA00143"/>
<dbReference type="BioGRID-ORCS" id="134111">
    <property type="hits" value="11 hits in 1148 CRISPR screens"/>
</dbReference>
<dbReference type="ChiTaRS" id="UBE2QL1">
    <property type="organism name" value="human"/>
</dbReference>
<dbReference type="GenomeRNAi" id="134111"/>
<dbReference type="Pharos" id="A1L167">
    <property type="development level" value="Tbio"/>
</dbReference>
<dbReference type="PRO" id="PR:A1L167"/>
<dbReference type="Proteomes" id="UP000005640">
    <property type="component" value="Chromosome 5"/>
</dbReference>
<dbReference type="RNAct" id="A1L167">
    <property type="molecule type" value="protein"/>
</dbReference>
<dbReference type="Bgee" id="ENSG00000215218">
    <property type="expression patterns" value="Expressed in endothelial cell and 165 other cell types or tissues"/>
</dbReference>
<dbReference type="GO" id="GO:0005654">
    <property type="term" value="C:nucleoplasm"/>
    <property type="evidence" value="ECO:0000314"/>
    <property type="project" value="HPA"/>
</dbReference>
<dbReference type="GO" id="GO:0005634">
    <property type="term" value="C:nucleus"/>
    <property type="evidence" value="ECO:0000314"/>
    <property type="project" value="UniProtKB"/>
</dbReference>
<dbReference type="GO" id="GO:0005886">
    <property type="term" value="C:plasma membrane"/>
    <property type="evidence" value="ECO:0000314"/>
    <property type="project" value="HPA"/>
</dbReference>
<dbReference type="GO" id="GO:0005524">
    <property type="term" value="F:ATP binding"/>
    <property type="evidence" value="ECO:0007669"/>
    <property type="project" value="UniProtKB-KW"/>
</dbReference>
<dbReference type="GO" id="GO:0061631">
    <property type="term" value="F:ubiquitin conjugating enzyme activity"/>
    <property type="evidence" value="ECO:0000314"/>
    <property type="project" value="MGI"/>
</dbReference>
<dbReference type="GO" id="GO:0000209">
    <property type="term" value="P:protein polyubiquitination"/>
    <property type="evidence" value="ECO:0000318"/>
    <property type="project" value="GO_Central"/>
</dbReference>
<dbReference type="CDD" id="cd23802">
    <property type="entry name" value="UBCc_UBE2Q"/>
    <property type="match status" value="1"/>
</dbReference>
<dbReference type="FunFam" id="3.10.110.10:FF:000036">
    <property type="entry name" value="ubiquitin-conjugating enzyme E2Q-like protein 1"/>
    <property type="match status" value="1"/>
</dbReference>
<dbReference type="Gene3D" id="3.10.110.10">
    <property type="entry name" value="Ubiquitin Conjugating Enzyme"/>
    <property type="match status" value="1"/>
</dbReference>
<dbReference type="InterPro" id="IPR000608">
    <property type="entry name" value="UBQ-conjugat_E2_core"/>
</dbReference>
<dbReference type="InterPro" id="IPR016135">
    <property type="entry name" value="UBQ-conjugating_enzyme/RWD"/>
</dbReference>
<dbReference type="Pfam" id="PF00179">
    <property type="entry name" value="UQ_con"/>
    <property type="match status" value="1"/>
</dbReference>
<dbReference type="SMART" id="SM00212">
    <property type="entry name" value="UBCc"/>
    <property type="match status" value="1"/>
</dbReference>
<dbReference type="SUPFAM" id="SSF54495">
    <property type="entry name" value="UBC-like"/>
    <property type="match status" value="1"/>
</dbReference>
<dbReference type="PROSITE" id="PS50127">
    <property type="entry name" value="UBC_2"/>
    <property type="match status" value="1"/>
</dbReference>
<comment type="function">
    <text evidence="2">Probable E2 ubiquitin-protein ligase that catalyzes the covalent attachment of ubiquitin to target proteins. May facilitate the monoubiquitination and degradation of MTOR and CCNE1 through interaction with FBXW7.</text>
</comment>
<comment type="catalytic activity">
    <reaction evidence="1">
        <text>S-ubiquitinyl-[E1 ubiquitin-activating enzyme]-L-cysteine + [E2 ubiquitin-conjugating enzyme]-L-cysteine = [E1 ubiquitin-activating enzyme]-L-cysteine + S-ubiquitinyl-[E2 ubiquitin-conjugating enzyme]-L-cysteine.</text>
        <dbReference type="EC" id="2.3.2.23"/>
    </reaction>
</comment>
<comment type="pathway">
    <text evidence="1">Protein modification; protein ubiquitination.</text>
</comment>
<comment type="subunit">
    <text evidence="2">Interacts with FBXW7.</text>
</comment>
<comment type="subcellular location">
    <subcellularLocation>
        <location evidence="2">Nucleus</location>
    </subcellularLocation>
</comment>
<comment type="disease">
    <text evidence="2">A chromosomal aberration involving UBE2QL1 has been found in a sporadic case of renal cell carcinoma (RCC). Translocation t(5;19)(p15.3;q12). No gene is disrupted by the chromosome 19 breakpoint.</text>
</comment>
<comment type="similarity">
    <text evidence="1">Belongs to the ubiquitin-conjugating enzyme family.</text>
</comment>
<comment type="sequence caution" evidence="3">
    <conflict type="erroneous initiation">
        <sequence resource="EMBL-CDS" id="AAI27724"/>
    </conflict>
    <text>Extended N-terminus.</text>
</comment>
<comment type="sequence caution" evidence="3">
    <conflict type="erroneous initiation">
        <sequence resource="EMBL-CDS" id="AAI50555"/>
    </conflict>
    <text>Extended N-terminus.</text>
</comment>
<evidence type="ECO:0000255" key="1">
    <source>
        <dbReference type="PROSITE-ProRule" id="PRU00388"/>
    </source>
</evidence>
<evidence type="ECO:0000269" key="2">
    <source>
    </source>
</evidence>
<evidence type="ECO:0000305" key="3"/>
<sequence>MKELQDIARLSDRFISVELVDESLFDWNVKLHQVDKDSVLWQDMKETNTEFILLNLTFPDNFPFSPPFMRVLSPRLENGYVLDGGAICMELLTPRGWSSAYTVEAVMRQFAASLVKGQGRICRKAGKSKKSFSRKEAEATFKSLVKTHEKYGWVTPPVSDG</sequence>
<name>U2QL1_HUMAN</name>
<accession>A1L167</accession>
<proteinExistence type="evidence at protein level"/>
<protein>
    <recommendedName>
        <fullName>Ubiquitin-conjugating enzyme E2Q-like protein 1</fullName>
        <ecNumber>2.3.2.23</ecNumber>
    </recommendedName>
    <alternativeName>
        <fullName>E2Q-like ubiquitin-conjugating enzyme 1</fullName>
    </alternativeName>
</protein>
<organism>
    <name type="scientific">Homo sapiens</name>
    <name type="common">Human</name>
    <dbReference type="NCBI Taxonomy" id="9606"/>
    <lineage>
        <taxon>Eukaryota</taxon>
        <taxon>Metazoa</taxon>
        <taxon>Chordata</taxon>
        <taxon>Craniata</taxon>
        <taxon>Vertebrata</taxon>
        <taxon>Euteleostomi</taxon>
        <taxon>Mammalia</taxon>
        <taxon>Eutheria</taxon>
        <taxon>Euarchontoglires</taxon>
        <taxon>Primates</taxon>
        <taxon>Haplorrhini</taxon>
        <taxon>Catarrhini</taxon>
        <taxon>Hominidae</taxon>
        <taxon>Homo</taxon>
    </lineage>
</organism>
<reference key="1">
    <citation type="journal article" date="2004" name="Genome Res.">
        <title>The status, quality, and expansion of the NIH full-length cDNA project: the Mammalian Gene Collection (MGC).</title>
        <authorList>
            <consortium name="The MGC Project Team"/>
        </authorList>
    </citation>
    <scope>NUCLEOTIDE SEQUENCE [LARGE SCALE MRNA]</scope>
</reference>
<reference key="2">
    <citation type="journal article" date="2013" name="Hum. Mutat.">
        <title>UBE2QL1 is disrupted by a constitutional translocation associated with renal tumor predisposition and is a novel candidate renal tumor suppressor gene.</title>
        <authorList>
            <person name="Wake N.C."/>
            <person name="Ricketts C.J."/>
            <person name="Morris M.R."/>
            <person name="Prigmore E."/>
            <person name="Gribble S.M."/>
            <person name="Skytte A.B."/>
            <person name="Brown M."/>
            <person name="Clarke N."/>
            <person name="Banks R.E."/>
            <person name="Hodgson S."/>
            <person name="Turnell A.S."/>
            <person name="Maher E.R."/>
            <person name="Woodward E.R."/>
        </authorList>
    </citation>
    <scope>FUNCTION</scope>
    <scope>SUBCELLULAR LOCATION</scope>
    <scope>CHROMOSOMAL TRANSLOCATION</scope>
    <scope>INTERACTION WITH FBXW7</scope>
    <scope>INVOLVEMENT IN RCC</scope>
    <scope>MUTAGENESIS OF CYS-88</scope>
    <scope>ACTIVE SITE</scope>
</reference>